<reference key="1">
    <citation type="journal article" date="2009" name="Genome Res.">
        <title>Comparative genomic analyses of the human fungal pathogens Coccidioides and their relatives.</title>
        <authorList>
            <person name="Sharpton T.J."/>
            <person name="Stajich J.E."/>
            <person name="Rounsley S.D."/>
            <person name="Gardner M.J."/>
            <person name="Wortman J.R."/>
            <person name="Jordar V.S."/>
            <person name="Maiti R."/>
            <person name="Kodira C.D."/>
            <person name="Neafsey D.E."/>
            <person name="Zeng Q."/>
            <person name="Hung C.-Y."/>
            <person name="McMahan C."/>
            <person name="Muszewska A."/>
            <person name="Grynberg M."/>
            <person name="Mandel M.A."/>
            <person name="Kellner E.M."/>
            <person name="Barker B.M."/>
            <person name="Galgiani J.N."/>
            <person name="Orbach M.J."/>
            <person name="Kirkland T.N."/>
            <person name="Cole G.T."/>
            <person name="Henn M.R."/>
            <person name="Birren B.W."/>
            <person name="Taylor J.W."/>
        </authorList>
    </citation>
    <scope>NUCLEOTIDE SEQUENCE [LARGE SCALE GENOMIC DNA]</scope>
    <source>
        <strain>UAMH 1704</strain>
    </source>
</reference>
<name>CHO2_UNCRE</name>
<protein>
    <recommendedName>
        <fullName evidence="1">Phosphatidylethanolamine N-methyltransferase</fullName>
        <shortName evidence="1">PE methyltransferase</shortName>
        <shortName evidence="1">PEAMT</shortName>
        <shortName evidence="1">PEMT</shortName>
        <ecNumber evidence="1">2.1.1.17</ecNumber>
    </recommendedName>
</protein>
<feature type="chain" id="PRO_0000405921" description="Phosphatidylethanolamine N-methyltransferase">
    <location>
        <begin position="1"/>
        <end position="962"/>
    </location>
</feature>
<feature type="topological domain" description="Lumenal" evidence="1">
    <location>
        <begin position="1"/>
        <end position="85"/>
    </location>
</feature>
<feature type="transmembrane region" description="Helical" evidence="1">
    <location>
        <begin position="86"/>
        <end position="106"/>
    </location>
</feature>
<feature type="topological domain" description="Cytoplasmic" evidence="1">
    <location>
        <begin position="107"/>
        <end position="109"/>
    </location>
</feature>
<feature type="transmembrane region" description="Helical" evidence="1">
    <location>
        <begin position="110"/>
        <end position="130"/>
    </location>
</feature>
<feature type="topological domain" description="Lumenal" evidence="1">
    <location>
        <begin position="131"/>
        <end position="195"/>
    </location>
</feature>
<feature type="transmembrane region" description="Helical" evidence="1">
    <location>
        <begin position="196"/>
        <end position="216"/>
    </location>
</feature>
<feature type="topological domain" description="Cytoplasmic" evidence="1">
    <location>
        <begin position="217"/>
        <end position="223"/>
    </location>
</feature>
<feature type="transmembrane region" description="Helical" evidence="1">
    <location>
        <begin position="224"/>
        <end position="244"/>
    </location>
</feature>
<feature type="topological domain" description="Lumenal" evidence="1">
    <location>
        <begin position="245"/>
        <end position="277"/>
    </location>
</feature>
<feature type="transmembrane region" description="Helical" evidence="1">
    <location>
        <begin position="278"/>
        <end position="298"/>
    </location>
</feature>
<feature type="topological domain" description="Cytoplasmic" evidence="1">
    <location>
        <begin position="299"/>
        <end position="300"/>
    </location>
</feature>
<feature type="transmembrane region" description="Helical" evidence="1">
    <location>
        <begin position="301"/>
        <end position="321"/>
    </location>
</feature>
<feature type="topological domain" description="Lumenal" evidence="1">
    <location>
        <begin position="322"/>
        <end position="392"/>
    </location>
</feature>
<feature type="transmembrane region" description="Helical" evidence="1">
    <location>
        <begin position="393"/>
        <end position="413"/>
    </location>
</feature>
<feature type="topological domain" description="Cytoplasmic" evidence="1">
    <location>
        <position position="414"/>
    </location>
</feature>
<feature type="transmembrane region" description="Helical" evidence="1">
    <location>
        <begin position="415"/>
        <end position="435"/>
    </location>
</feature>
<feature type="topological domain" description="Lumenal" evidence="1">
    <location>
        <begin position="436"/>
        <end position="462"/>
    </location>
</feature>
<feature type="transmembrane region" description="Helical" evidence="1">
    <location>
        <begin position="463"/>
        <end position="483"/>
    </location>
</feature>
<feature type="topological domain" description="Cytoplasmic" evidence="1">
    <location>
        <begin position="484"/>
        <end position="491"/>
    </location>
</feature>
<feature type="transmembrane region" description="Helical" evidence="1">
    <location>
        <begin position="492"/>
        <end position="512"/>
    </location>
</feature>
<feature type="topological domain" description="Lumenal" evidence="1">
    <location>
        <begin position="513"/>
        <end position="571"/>
    </location>
</feature>
<feature type="transmembrane region" description="Helical" evidence="1">
    <location>
        <begin position="572"/>
        <end position="592"/>
    </location>
</feature>
<feature type="topological domain" description="Cytoplasmic" evidence="1">
    <location>
        <begin position="593"/>
        <end position="962"/>
    </location>
</feature>
<feature type="region of interest" description="Disordered" evidence="2">
    <location>
        <begin position="1"/>
        <end position="57"/>
    </location>
</feature>
<feature type="region of interest" description="Disordered" evidence="2">
    <location>
        <begin position="332"/>
        <end position="373"/>
    </location>
</feature>
<feature type="region of interest" description="Disordered" evidence="2">
    <location>
        <begin position="780"/>
        <end position="802"/>
    </location>
</feature>
<feature type="compositionally biased region" description="Basic and acidic residues" evidence="2">
    <location>
        <begin position="38"/>
        <end position="52"/>
    </location>
</feature>
<feature type="compositionally biased region" description="Basic and acidic residues" evidence="2">
    <location>
        <begin position="338"/>
        <end position="351"/>
    </location>
</feature>
<feature type="compositionally biased region" description="Polar residues" evidence="2">
    <location>
        <begin position="352"/>
        <end position="361"/>
    </location>
</feature>
<feature type="compositionally biased region" description="Basic and acidic residues" evidence="2">
    <location>
        <begin position="789"/>
        <end position="802"/>
    </location>
</feature>
<organism>
    <name type="scientific">Uncinocarpus reesii (strain UAMH 1704)</name>
    <dbReference type="NCBI Taxonomy" id="336963"/>
    <lineage>
        <taxon>Eukaryota</taxon>
        <taxon>Fungi</taxon>
        <taxon>Dikarya</taxon>
        <taxon>Ascomycota</taxon>
        <taxon>Pezizomycotina</taxon>
        <taxon>Eurotiomycetes</taxon>
        <taxon>Eurotiomycetidae</taxon>
        <taxon>Onygenales</taxon>
        <taxon>Onygenaceae</taxon>
        <taxon>Uncinocarpus</taxon>
    </lineage>
</organism>
<proteinExistence type="inferred from homology"/>
<keyword id="KW-0256">Endoplasmic reticulum</keyword>
<keyword id="KW-0444">Lipid biosynthesis</keyword>
<keyword id="KW-0443">Lipid metabolism</keyword>
<keyword id="KW-0472">Membrane</keyword>
<keyword id="KW-0489">Methyltransferase</keyword>
<keyword id="KW-0594">Phospholipid biosynthesis</keyword>
<keyword id="KW-1208">Phospholipid metabolism</keyword>
<keyword id="KW-1185">Reference proteome</keyword>
<keyword id="KW-0949">S-adenosyl-L-methionine</keyword>
<keyword id="KW-0808">Transferase</keyword>
<keyword id="KW-0812">Transmembrane</keyword>
<keyword id="KW-1133">Transmembrane helix</keyword>
<dbReference type="EC" id="2.1.1.17" evidence="1"/>
<dbReference type="EMBL" id="CH476615">
    <property type="protein sequence ID" value="EEP75538.1"/>
    <property type="molecule type" value="Genomic_DNA"/>
</dbReference>
<dbReference type="RefSeq" id="XP_002540871.1">
    <property type="nucleotide sequence ID" value="XM_002540825.1"/>
</dbReference>
<dbReference type="SMR" id="C4JDF8"/>
<dbReference type="FunCoup" id="C4JDF8">
    <property type="interactions" value="56"/>
</dbReference>
<dbReference type="STRING" id="336963.C4JDF8"/>
<dbReference type="GeneID" id="8444467"/>
<dbReference type="KEGG" id="ure:UREG_00384"/>
<dbReference type="VEuPathDB" id="FungiDB:UREG_00384"/>
<dbReference type="eggNOG" id="ENOG502QRGH">
    <property type="taxonomic scope" value="Eukaryota"/>
</dbReference>
<dbReference type="HOGENOM" id="CLU_005987_0_0_1"/>
<dbReference type="InParanoid" id="C4JDF8"/>
<dbReference type="OMA" id="RIWYSVG"/>
<dbReference type="OrthoDB" id="4583at2759"/>
<dbReference type="UniPathway" id="UPA00753"/>
<dbReference type="Proteomes" id="UP000002058">
    <property type="component" value="Unassembled WGS sequence"/>
</dbReference>
<dbReference type="GO" id="GO:0032541">
    <property type="term" value="C:cortical endoplasmic reticulum"/>
    <property type="evidence" value="ECO:0007669"/>
    <property type="project" value="EnsemblFungi"/>
</dbReference>
<dbReference type="GO" id="GO:0005789">
    <property type="term" value="C:endoplasmic reticulum membrane"/>
    <property type="evidence" value="ECO:0007669"/>
    <property type="project" value="UniProtKB-SubCell"/>
</dbReference>
<dbReference type="GO" id="GO:0097038">
    <property type="term" value="C:perinuclear endoplasmic reticulum"/>
    <property type="evidence" value="ECO:0007669"/>
    <property type="project" value="EnsemblFungi"/>
</dbReference>
<dbReference type="GO" id="GO:0004608">
    <property type="term" value="F:phosphatidylethanolamine N-methyltransferase activity"/>
    <property type="evidence" value="ECO:0007669"/>
    <property type="project" value="UniProtKB-UniRule"/>
</dbReference>
<dbReference type="GO" id="GO:0032259">
    <property type="term" value="P:methylation"/>
    <property type="evidence" value="ECO:0007669"/>
    <property type="project" value="UniProtKB-KW"/>
</dbReference>
<dbReference type="GO" id="GO:0006656">
    <property type="term" value="P:phosphatidylcholine biosynthetic process"/>
    <property type="evidence" value="ECO:0007669"/>
    <property type="project" value="UniProtKB-UniRule"/>
</dbReference>
<dbReference type="FunFam" id="2.60.40.2840:FF:000006">
    <property type="entry name" value="Phosphatidylethanolamine N-methyltransferase"/>
    <property type="match status" value="1"/>
</dbReference>
<dbReference type="Gene3D" id="2.60.40.2840">
    <property type="match status" value="1"/>
</dbReference>
<dbReference type="HAMAP" id="MF_03217">
    <property type="entry name" value="PEMT"/>
    <property type="match status" value="1"/>
</dbReference>
<dbReference type="InterPro" id="IPR007318">
    <property type="entry name" value="Phopholipid_MeTrfase"/>
</dbReference>
<dbReference type="InterPro" id="IPR016219">
    <property type="entry name" value="Phosphatid-EA_MeTrfase_fun"/>
</dbReference>
<dbReference type="PANTHER" id="PTHR32138">
    <property type="entry name" value="PHOSPHATIDYLETHANOLAMINE N-METHYLTRANSFERASE"/>
    <property type="match status" value="1"/>
</dbReference>
<dbReference type="PANTHER" id="PTHR32138:SF0">
    <property type="entry name" value="PHOSPHATIDYLETHANOLAMINE N-METHYLTRANSFERASE"/>
    <property type="match status" value="1"/>
</dbReference>
<dbReference type="Pfam" id="PF04191">
    <property type="entry name" value="PEMT"/>
    <property type="match status" value="2"/>
</dbReference>
<dbReference type="PIRSF" id="PIRSF000383">
    <property type="entry name" value="PEAMT"/>
    <property type="match status" value="1"/>
</dbReference>
<dbReference type="PROSITE" id="PS51598">
    <property type="entry name" value="SAM_CHO2"/>
    <property type="match status" value="1"/>
</dbReference>
<comment type="function">
    <text evidence="1">Catalyzes the first step of the methylation pathway of phosphatidylcholine biosynthesis, the SAM-dependent methylation of phosphatidylethanolamine (PE) to phosphatidylmonomethylethanolamine (PMME).</text>
</comment>
<comment type="catalytic activity">
    <reaction evidence="1">
        <text>a 1,2-diacyl-sn-glycero-3-phosphoethanolamine + S-adenosyl-L-methionine = a 1,2-diacyl-sn-glycero-3-phospho-N-methylethanolamine + S-adenosyl-L-homocysteine + H(+)</text>
        <dbReference type="Rhea" id="RHEA:11164"/>
        <dbReference type="ChEBI" id="CHEBI:15378"/>
        <dbReference type="ChEBI" id="CHEBI:57856"/>
        <dbReference type="ChEBI" id="CHEBI:59789"/>
        <dbReference type="ChEBI" id="CHEBI:64573"/>
        <dbReference type="ChEBI" id="CHEBI:64612"/>
        <dbReference type="EC" id="2.1.1.17"/>
    </reaction>
</comment>
<comment type="pathway">
    <text evidence="1">Phospholipid metabolism; phosphatidylcholine biosynthesis.</text>
</comment>
<comment type="subcellular location">
    <subcellularLocation>
        <location evidence="1">Endoplasmic reticulum membrane</location>
        <topology evidence="1">Multi-pass membrane protein</topology>
    </subcellularLocation>
</comment>
<comment type="similarity">
    <text evidence="1">Belongs to the class VI-like SAM-binding methyltransferase superfamily. CHO2 family.</text>
</comment>
<evidence type="ECO:0000255" key="1">
    <source>
        <dbReference type="HAMAP-Rule" id="MF_03217"/>
    </source>
</evidence>
<evidence type="ECO:0000256" key="2">
    <source>
        <dbReference type="SAM" id="MobiDB-lite"/>
    </source>
</evidence>
<gene>
    <name type="primary">CHO2</name>
    <name type="ORF">UREG_00384</name>
</gene>
<accession>C4JDF8</accession>
<sequence>MTDPAVSPLGCDGLRERRTQAPKETITPASLDPLMSKMRTDESSTVEPEKTTFGRTPDGTVFTVPHTRDMVSQLLSPSEPKNLSDILVLSILALHLLLLRALPTSFRIPVFAFIFLSWRAAYNIGIGWLLHMQSNHRTLVLWARKLQLFVDPSTGENRHPLLYRFIKRELETKIPENYSFENAPIEYNTWLVFRRVVDLILMCDFTSYCLFAVACGSRPVDEGFFMMLLRWSTGLSLVLFNLWVKLDAHRVVKDFAWYWGDFFYLIDQDLTFDGVFEMAPHPMYSVGYAGYYGISLMAASYKVLFISILAHAAQFAFLVLVENPHIEKTYNAPPPRKRVVDPDTALHEEPGSRSNSFNSDATPPMSLPGTTQPRSTHALVGSIDFHRVTDLSVLLIHLLFFAFTMVTPSTPIYRFLFVLNAALWRIWYSAGIGYILDRQSARKSWTRHFVKFGEGQDEAWRQWQGIYHLSMTTCYASFIAAAWKMYTLPQDWGYGLAILRHVLGASLIALQIWTSMSIYESLGEFGWFFGDFFYDESPKLTYSGIYRFLNNPERVLGLAGVWGAVLITNSRAMIFLALLSHTLSIAFIQLVERPHMQKLYGRSLRRDAGLVKSIKRSLPNSLKQFQGSVDKILDESIDFVEEVIDTARPKLAAGVNTFVKDTTALFHKYPARITITRLEPDLAGYELKDYALSVEGTELTQFNKSGGETKEKSQSSRGSENLVFEYGAPIKVKWTAPLNHSKKDWVGLYMVTHNSSREITKVSSQGRWVATNEGAFDSSTSEIGLKSSDISEHSQGKNGKSREVASGEMVFSGDKLWWNQGVFEFRYHHNGKHNVMAISRPFEIRIAKFDENEIPLDNHGVVRPAIEAALLPIVQNCLDRDADIAPQNSEEAFGSQVDRDSKYAKRVVFAVQHMFGIEFAPEVVCADGSVRNLAWRICNAKKVLAPYSMSRSSGTTTPVQED</sequence>